<dbReference type="EC" id="1.1.1.94" evidence="1"/>
<dbReference type="EMBL" id="CP000038">
    <property type="protein sequence ID" value="AAZ90339.1"/>
    <property type="molecule type" value="Genomic_DNA"/>
</dbReference>
<dbReference type="RefSeq" id="WP_001076194.1">
    <property type="nucleotide sequence ID" value="NC_007384.1"/>
</dbReference>
<dbReference type="SMR" id="Q3YVX3"/>
<dbReference type="GeneID" id="93778322"/>
<dbReference type="KEGG" id="ssn:SSON_3797"/>
<dbReference type="HOGENOM" id="CLU_033449_0_2_6"/>
<dbReference type="UniPathway" id="UPA00940"/>
<dbReference type="Proteomes" id="UP000002529">
    <property type="component" value="Chromosome"/>
</dbReference>
<dbReference type="GO" id="GO:0005829">
    <property type="term" value="C:cytosol"/>
    <property type="evidence" value="ECO:0007669"/>
    <property type="project" value="TreeGrafter"/>
</dbReference>
<dbReference type="GO" id="GO:0047952">
    <property type="term" value="F:glycerol-3-phosphate dehydrogenase [NAD(P)+] activity"/>
    <property type="evidence" value="ECO:0007669"/>
    <property type="project" value="UniProtKB-UniRule"/>
</dbReference>
<dbReference type="GO" id="GO:0051287">
    <property type="term" value="F:NAD binding"/>
    <property type="evidence" value="ECO:0007669"/>
    <property type="project" value="InterPro"/>
</dbReference>
<dbReference type="GO" id="GO:0005975">
    <property type="term" value="P:carbohydrate metabolic process"/>
    <property type="evidence" value="ECO:0007669"/>
    <property type="project" value="InterPro"/>
</dbReference>
<dbReference type="GO" id="GO:0046167">
    <property type="term" value="P:glycerol-3-phosphate biosynthetic process"/>
    <property type="evidence" value="ECO:0007669"/>
    <property type="project" value="UniProtKB-UniRule"/>
</dbReference>
<dbReference type="GO" id="GO:0046168">
    <property type="term" value="P:glycerol-3-phosphate catabolic process"/>
    <property type="evidence" value="ECO:0007669"/>
    <property type="project" value="InterPro"/>
</dbReference>
<dbReference type="GO" id="GO:0046474">
    <property type="term" value="P:glycerophospholipid biosynthetic process"/>
    <property type="evidence" value="ECO:0007669"/>
    <property type="project" value="TreeGrafter"/>
</dbReference>
<dbReference type="FunFam" id="1.10.1040.10:FF:000001">
    <property type="entry name" value="Glycerol-3-phosphate dehydrogenase [NAD(P)+]"/>
    <property type="match status" value="1"/>
</dbReference>
<dbReference type="FunFam" id="3.40.50.720:FF:000019">
    <property type="entry name" value="Glycerol-3-phosphate dehydrogenase [NAD(P)+]"/>
    <property type="match status" value="1"/>
</dbReference>
<dbReference type="Gene3D" id="1.10.1040.10">
    <property type="entry name" value="N-(1-d-carboxylethyl)-l-norvaline Dehydrogenase, domain 2"/>
    <property type="match status" value="1"/>
</dbReference>
<dbReference type="Gene3D" id="3.40.50.720">
    <property type="entry name" value="NAD(P)-binding Rossmann-like Domain"/>
    <property type="match status" value="1"/>
</dbReference>
<dbReference type="HAMAP" id="MF_00394">
    <property type="entry name" value="NAD_Glyc3P_dehydrog"/>
    <property type="match status" value="1"/>
</dbReference>
<dbReference type="InterPro" id="IPR008927">
    <property type="entry name" value="6-PGluconate_DH-like_C_sf"/>
</dbReference>
<dbReference type="InterPro" id="IPR013328">
    <property type="entry name" value="6PGD_dom2"/>
</dbReference>
<dbReference type="InterPro" id="IPR006168">
    <property type="entry name" value="G3P_DH_NAD-dep"/>
</dbReference>
<dbReference type="InterPro" id="IPR006109">
    <property type="entry name" value="G3P_DH_NAD-dep_C"/>
</dbReference>
<dbReference type="InterPro" id="IPR011128">
    <property type="entry name" value="G3P_DH_NAD-dep_N"/>
</dbReference>
<dbReference type="InterPro" id="IPR036291">
    <property type="entry name" value="NAD(P)-bd_dom_sf"/>
</dbReference>
<dbReference type="NCBIfam" id="NF000939">
    <property type="entry name" value="PRK00094.1-1"/>
    <property type="match status" value="1"/>
</dbReference>
<dbReference type="NCBIfam" id="NF000940">
    <property type="entry name" value="PRK00094.1-2"/>
    <property type="match status" value="1"/>
</dbReference>
<dbReference type="NCBIfam" id="NF000942">
    <property type="entry name" value="PRK00094.1-4"/>
    <property type="match status" value="1"/>
</dbReference>
<dbReference type="PANTHER" id="PTHR11728">
    <property type="entry name" value="GLYCEROL-3-PHOSPHATE DEHYDROGENASE"/>
    <property type="match status" value="1"/>
</dbReference>
<dbReference type="PANTHER" id="PTHR11728:SF1">
    <property type="entry name" value="GLYCEROL-3-PHOSPHATE DEHYDROGENASE [NAD(+)] 2, CHLOROPLASTIC"/>
    <property type="match status" value="1"/>
</dbReference>
<dbReference type="Pfam" id="PF07479">
    <property type="entry name" value="NAD_Gly3P_dh_C"/>
    <property type="match status" value="1"/>
</dbReference>
<dbReference type="Pfam" id="PF01210">
    <property type="entry name" value="NAD_Gly3P_dh_N"/>
    <property type="match status" value="1"/>
</dbReference>
<dbReference type="PIRSF" id="PIRSF000114">
    <property type="entry name" value="Glycerol-3-P_dh"/>
    <property type="match status" value="1"/>
</dbReference>
<dbReference type="PRINTS" id="PR00077">
    <property type="entry name" value="GPDHDRGNASE"/>
</dbReference>
<dbReference type="SUPFAM" id="SSF48179">
    <property type="entry name" value="6-phosphogluconate dehydrogenase C-terminal domain-like"/>
    <property type="match status" value="1"/>
</dbReference>
<dbReference type="SUPFAM" id="SSF51735">
    <property type="entry name" value="NAD(P)-binding Rossmann-fold domains"/>
    <property type="match status" value="1"/>
</dbReference>
<dbReference type="PROSITE" id="PS00957">
    <property type="entry name" value="NAD_G3PDH"/>
    <property type="match status" value="1"/>
</dbReference>
<accession>Q3YVX3</accession>
<gene>
    <name evidence="1" type="primary">gpsA</name>
    <name type="ordered locus">SSON_3797</name>
</gene>
<protein>
    <recommendedName>
        <fullName evidence="1">Glycerol-3-phosphate dehydrogenase [NAD(P)+]</fullName>
        <ecNumber evidence="1">1.1.1.94</ecNumber>
    </recommendedName>
    <alternativeName>
        <fullName evidence="1">NAD(P)(+)-dependent glycerol-3-phosphate dehydrogenase</fullName>
    </alternativeName>
    <alternativeName>
        <fullName evidence="1">NAD(P)H-dependent dihydroxyacetone-phosphate reductase</fullName>
    </alternativeName>
</protein>
<sequence>MNQRNASMTVIGAGSYGTALAITLARNGHEVVLWGHDPEHIATLERDRCNAAFLPDVPFPDTLHLESDLATALAASRNILVVVPSHVFGEVLRQIKPLMRPDARLVWATKGLEAETGRLLQDVAREALGDQIPLAVISGPTFAKELAAGLPTAISLASTDQTFADDLQQLLHCGKSFRVYSNPDFIGVQLGGAVKNVIAIGAGMSDGIGFGANARTALITRGLAEMSRLGAALGADPATFMGMAGLGDLVLTCTDNQSRNRRFGMMLGQGMDVQSAQEKIGQVVEGYRNTKEVRELAHRFGVEMPITEEIYQVLYCGKNAREAALTLLGRARKDERSSH</sequence>
<evidence type="ECO:0000255" key="1">
    <source>
        <dbReference type="HAMAP-Rule" id="MF_00394"/>
    </source>
</evidence>
<feature type="chain" id="PRO_0000255370" description="Glycerol-3-phosphate dehydrogenase [NAD(P)+]">
    <location>
        <begin position="1"/>
        <end position="339"/>
    </location>
</feature>
<feature type="active site" description="Proton acceptor" evidence="1">
    <location>
        <position position="195"/>
    </location>
</feature>
<feature type="binding site" evidence="1">
    <location>
        <position position="15"/>
    </location>
    <ligand>
        <name>NADPH</name>
        <dbReference type="ChEBI" id="CHEBI:57783"/>
    </ligand>
</feature>
<feature type="binding site" evidence="1">
    <location>
        <position position="16"/>
    </location>
    <ligand>
        <name>NADPH</name>
        <dbReference type="ChEBI" id="CHEBI:57783"/>
    </ligand>
</feature>
<feature type="binding site" evidence="1">
    <location>
        <position position="36"/>
    </location>
    <ligand>
        <name>NADPH</name>
        <dbReference type="ChEBI" id="CHEBI:57783"/>
    </ligand>
</feature>
<feature type="binding site" evidence="1">
    <location>
        <position position="110"/>
    </location>
    <ligand>
        <name>NADPH</name>
        <dbReference type="ChEBI" id="CHEBI:57783"/>
    </ligand>
</feature>
<feature type="binding site" evidence="1">
    <location>
        <position position="110"/>
    </location>
    <ligand>
        <name>sn-glycerol 3-phosphate</name>
        <dbReference type="ChEBI" id="CHEBI:57597"/>
    </ligand>
</feature>
<feature type="binding site" evidence="1">
    <location>
        <position position="139"/>
    </location>
    <ligand>
        <name>sn-glycerol 3-phosphate</name>
        <dbReference type="ChEBI" id="CHEBI:57597"/>
    </ligand>
</feature>
<feature type="binding site" evidence="1">
    <location>
        <position position="141"/>
    </location>
    <ligand>
        <name>sn-glycerol 3-phosphate</name>
        <dbReference type="ChEBI" id="CHEBI:57597"/>
    </ligand>
</feature>
<feature type="binding site" evidence="1">
    <location>
        <position position="143"/>
    </location>
    <ligand>
        <name>NADPH</name>
        <dbReference type="ChEBI" id="CHEBI:57783"/>
    </ligand>
</feature>
<feature type="binding site" evidence="1">
    <location>
        <position position="195"/>
    </location>
    <ligand>
        <name>sn-glycerol 3-phosphate</name>
        <dbReference type="ChEBI" id="CHEBI:57597"/>
    </ligand>
</feature>
<feature type="binding site" evidence="1">
    <location>
        <position position="248"/>
    </location>
    <ligand>
        <name>sn-glycerol 3-phosphate</name>
        <dbReference type="ChEBI" id="CHEBI:57597"/>
    </ligand>
</feature>
<feature type="binding site" evidence="1">
    <location>
        <position position="258"/>
    </location>
    <ligand>
        <name>sn-glycerol 3-phosphate</name>
        <dbReference type="ChEBI" id="CHEBI:57597"/>
    </ligand>
</feature>
<feature type="binding site" evidence="1">
    <location>
        <position position="259"/>
    </location>
    <ligand>
        <name>NADPH</name>
        <dbReference type="ChEBI" id="CHEBI:57783"/>
    </ligand>
</feature>
<feature type="binding site" evidence="1">
    <location>
        <position position="259"/>
    </location>
    <ligand>
        <name>sn-glycerol 3-phosphate</name>
        <dbReference type="ChEBI" id="CHEBI:57597"/>
    </ligand>
</feature>
<feature type="binding site" evidence="1">
    <location>
        <position position="260"/>
    </location>
    <ligand>
        <name>sn-glycerol 3-phosphate</name>
        <dbReference type="ChEBI" id="CHEBI:57597"/>
    </ligand>
</feature>
<feature type="binding site" evidence="1">
    <location>
        <position position="283"/>
    </location>
    <ligand>
        <name>NADPH</name>
        <dbReference type="ChEBI" id="CHEBI:57783"/>
    </ligand>
</feature>
<feature type="binding site" evidence="1">
    <location>
        <position position="285"/>
    </location>
    <ligand>
        <name>NADPH</name>
        <dbReference type="ChEBI" id="CHEBI:57783"/>
    </ligand>
</feature>
<reference key="1">
    <citation type="journal article" date="2005" name="Nucleic Acids Res.">
        <title>Genome dynamics and diversity of Shigella species, the etiologic agents of bacillary dysentery.</title>
        <authorList>
            <person name="Yang F."/>
            <person name="Yang J."/>
            <person name="Zhang X."/>
            <person name="Chen L."/>
            <person name="Jiang Y."/>
            <person name="Yan Y."/>
            <person name="Tang X."/>
            <person name="Wang J."/>
            <person name="Xiong Z."/>
            <person name="Dong J."/>
            <person name="Xue Y."/>
            <person name="Zhu Y."/>
            <person name="Xu X."/>
            <person name="Sun L."/>
            <person name="Chen S."/>
            <person name="Nie H."/>
            <person name="Peng J."/>
            <person name="Xu J."/>
            <person name="Wang Y."/>
            <person name="Yuan Z."/>
            <person name="Wen Y."/>
            <person name="Yao Z."/>
            <person name="Shen Y."/>
            <person name="Qiang B."/>
            <person name="Hou Y."/>
            <person name="Yu J."/>
            <person name="Jin Q."/>
        </authorList>
    </citation>
    <scope>NUCLEOTIDE SEQUENCE [LARGE SCALE GENOMIC DNA]</scope>
    <source>
        <strain>Ss046</strain>
    </source>
</reference>
<organism>
    <name type="scientific">Shigella sonnei (strain Ss046)</name>
    <dbReference type="NCBI Taxonomy" id="300269"/>
    <lineage>
        <taxon>Bacteria</taxon>
        <taxon>Pseudomonadati</taxon>
        <taxon>Pseudomonadota</taxon>
        <taxon>Gammaproteobacteria</taxon>
        <taxon>Enterobacterales</taxon>
        <taxon>Enterobacteriaceae</taxon>
        <taxon>Shigella</taxon>
    </lineage>
</organism>
<comment type="function">
    <text evidence="1">Catalyzes the reduction of the glycolytic intermediate dihydroxyacetone phosphate (DHAP) to sn-glycerol 3-phosphate (G3P), the key precursor for phospholipid synthesis.</text>
</comment>
<comment type="catalytic activity">
    <reaction evidence="1">
        <text>sn-glycerol 3-phosphate + NAD(+) = dihydroxyacetone phosphate + NADH + H(+)</text>
        <dbReference type="Rhea" id="RHEA:11092"/>
        <dbReference type="ChEBI" id="CHEBI:15378"/>
        <dbReference type="ChEBI" id="CHEBI:57540"/>
        <dbReference type="ChEBI" id="CHEBI:57597"/>
        <dbReference type="ChEBI" id="CHEBI:57642"/>
        <dbReference type="ChEBI" id="CHEBI:57945"/>
        <dbReference type="EC" id="1.1.1.94"/>
    </reaction>
    <physiologicalReaction direction="right-to-left" evidence="1">
        <dbReference type="Rhea" id="RHEA:11094"/>
    </physiologicalReaction>
</comment>
<comment type="catalytic activity">
    <reaction evidence="1">
        <text>sn-glycerol 3-phosphate + NADP(+) = dihydroxyacetone phosphate + NADPH + H(+)</text>
        <dbReference type="Rhea" id="RHEA:11096"/>
        <dbReference type="ChEBI" id="CHEBI:15378"/>
        <dbReference type="ChEBI" id="CHEBI:57597"/>
        <dbReference type="ChEBI" id="CHEBI:57642"/>
        <dbReference type="ChEBI" id="CHEBI:57783"/>
        <dbReference type="ChEBI" id="CHEBI:58349"/>
        <dbReference type="EC" id="1.1.1.94"/>
    </reaction>
    <physiologicalReaction direction="right-to-left" evidence="1">
        <dbReference type="Rhea" id="RHEA:11098"/>
    </physiologicalReaction>
</comment>
<comment type="pathway">
    <text evidence="1">Membrane lipid metabolism; glycerophospholipid metabolism.</text>
</comment>
<comment type="subcellular location">
    <subcellularLocation>
        <location evidence="1">Cytoplasm</location>
    </subcellularLocation>
</comment>
<comment type="similarity">
    <text evidence="1">Belongs to the NAD-dependent glycerol-3-phosphate dehydrogenase family.</text>
</comment>
<proteinExistence type="inferred from homology"/>
<name>GPDA_SHISS</name>
<keyword id="KW-0963">Cytoplasm</keyword>
<keyword id="KW-0444">Lipid biosynthesis</keyword>
<keyword id="KW-0443">Lipid metabolism</keyword>
<keyword id="KW-0520">NAD</keyword>
<keyword id="KW-0521">NADP</keyword>
<keyword id="KW-0547">Nucleotide-binding</keyword>
<keyword id="KW-0560">Oxidoreductase</keyword>
<keyword id="KW-0594">Phospholipid biosynthesis</keyword>
<keyword id="KW-1208">Phospholipid metabolism</keyword>
<keyword id="KW-1185">Reference proteome</keyword>